<dbReference type="EC" id="2.8.4.4" evidence="1"/>
<dbReference type="EMBL" id="CP000083">
    <property type="protein sequence ID" value="AAZ28467.1"/>
    <property type="molecule type" value="Genomic_DNA"/>
</dbReference>
<dbReference type="SMR" id="Q484J7"/>
<dbReference type="STRING" id="167879.CPS_1787"/>
<dbReference type="KEGG" id="cps:CPS_1787"/>
<dbReference type="eggNOG" id="COG0621">
    <property type="taxonomic scope" value="Bacteria"/>
</dbReference>
<dbReference type="HOGENOM" id="CLU_018697_0_0_6"/>
<dbReference type="Proteomes" id="UP000000547">
    <property type="component" value="Chromosome"/>
</dbReference>
<dbReference type="GO" id="GO:0005829">
    <property type="term" value="C:cytosol"/>
    <property type="evidence" value="ECO:0007669"/>
    <property type="project" value="TreeGrafter"/>
</dbReference>
<dbReference type="GO" id="GO:0051539">
    <property type="term" value="F:4 iron, 4 sulfur cluster binding"/>
    <property type="evidence" value="ECO:0007669"/>
    <property type="project" value="UniProtKB-UniRule"/>
</dbReference>
<dbReference type="GO" id="GO:0035599">
    <property type="term" value="F:aspartic acid methylthiotransferase activity"/>
    <property type="evidence" value="ECO:0007669"/>
    <property type="project" value="TreeGrafter"/>
</dbReference>
<dbReference type="GO" id="GO:0046872">
    <property type="term" value="F:metal ion binding"/>
    <property type="evidence" value="ECO:0007669"/>
    <property type="project" value="UniProtKB-KW"/>
</dbReference>
<dbReference type="GO" id="GO:0103039">
    <property type="term" value="F:protein methylthiotransferase activity"/>
    <property type="evidence" value="ECO:0007669"/>
    <property type="project" value="UniProtKB-EC"/>
</dbReference>
<dbReference type="GO" id="GO:0006400">
    <property type="term" value="P:tRNA modification"/>
    <property type="evidence" value="ECO:0007669"/>
    <property type="project" value="InterPro"/>
</dbReference>
<dbReference type="CDD" id="cd01335">
    <property type="entry name" value="Radical_SAM"/>
    <property type="match status" value="1"/>
</dbReference>
<dbReference type="FunFam" id="3.40.50.12160:FF:000002">
    <property type="entry name" value="Ribosomal protein S12 methylthiotransferase RimO"/>
    <property type="match status" value="1"/>
</dbReference>
<dbReference type="FunFam" id="3.80.30.20:FF:000001">
    <property type="entry name" value="tRNA-2-methylthio-N(6)-dimethylallyladenosine synthase 2"/>
    <property type="match status" value="1"/>
</dbReference>
<dbReference type="Gene3D" id="3.40.50.12160">
    <property type="entry name" value="Methylthiotransferase, N-terminal domain"/>
    <property type="match status" value="1"/>
</dbReference>
<dbReference type="Gene3D" id="2.40.50.140">
    <property type="entry name" value="Nucleic acid-binding proteins"/>
    <property type="match status" value="1"/>
</dbReference>
<dbReference type="Gene3D" id="3.80.30.20">
    <property type="entry name" value="tm_1862 like domain"/>
    <property type="match status" value="1"/>
</dbReference>
<dbReference type="HAMAP" id="MF_01865">
    <property type="entry name" value="MTTase_RimO"/>
    <property type="match status" value="1"/>
</dbReference>
<dbReference type="InterPro" id="IPR006638">
    <property type="entry name" value="Elp3/MiaA/NifB-like_rSAM"/>
</dbReference>
<dbReference type="InterPro" id="IPR005839">
    <property type="entry name" value="Methylthiotransferase"/>
</dbReference>
<dbReference type="InterPro" id="IPR020612">
    <property type="entry name" value="Methylthiotransferase_CS"/>
</dbReference>
<dbReference type="InterPro" id="IPR013848">
    <property type="entry name" value="Methylthiotransferase_N"/>
</dbReference>
<dbReference type="InterPro" id="IPR038135">
    <property type="entry name" value="Methylthiotransferase_N_sf"/>
</dbReference>
<dbReference type="InterPro" id="IPR012340">
    <property type="entry name" value="NA-bd_OB-fold"/>
</dbReference>
<dbReference type="InterPro" id="IPR005840">
    <property type="entry name" value="Ribosomal_uS12_MeSTrfase_RimO"/>
</dbReference>
<dbReference type="InterPro" id="IPR007197">
    <property type="entry name" value="rSAM"/>
</dbReference>
<dbReference type="InterPro" id="IPR023404">
    <property type="entry name" value="rSAM_horseshoe"/>
</dbReference>
<dbReference type="InterPro" id="IPR002792">
    <property type="entry name" value="TRAM_dom"/>
</dbReference>
<dbReference type="NCBIfam" id="TIGR01125">
    <property type="entry name" value="30S ribosomal protein S12 methylthiotransferase RimO"/>
    <property type="match status" value="1"/>
</dbReference>
<dbReference type="NCBIfam" id="TIGR00089">
    <property type="entry name" value="MiaB/RimO family radical SAM methylthiotransferase"/>
    <property type="match status" value="1"/>
</dbReference>
<dbReference type="PANTHER" id="PTHR43837">
    <property type="entry name" value="RIBOSOMAL PROTEIN S12 METHYLTHIOTRANSFERASE RIMO"/>
    <property type="match status" value="1"/>
</dbReference>
<dbReference type="PANTHER" id="PTHR43837:SF1">
    <property type="entry name" value="RIBOSOMAL PROTEIN US12 METHYLTHIOTRANSFERASE RIMO"/>
    <property type="match status" value="1"/>
</dbReference>
<dbReference type="Pfam" id="PF04055">
    <property type="entry name" value="Radical_SAM"/>
    <property type="match status" value="1"/>
</dbReference>
<dbReference type="Pfam" id="PF18693">
    <property type="entry name" value="TRAM_2"/>
    <property type="match status" value="1"/>
</dbReference>
<dbReference type="Pfam" id="PF00919">
    <property type="entry name" value="UPF0004"/>
    <property type="match status" value="1"/>
</dbReference>
<dbReference type="SFLD" id="SFLDG01082">
    <property type="entry name" value="B12-binding_domain_containing"/>
    <property type="match status" value="1"/>
</dbReference>
<dbReference type="SFLD" id="SFLDS00029">
    <property type="entry name" value="Radical_SAM"/>
    <property type="match status" value="1"/>
</dbReference>
<dbReference type="SFLD" id="SFLDF00274">
    <property type="entry name" value="ribosomal_protein_S12_methylth"/>
    <property type="match status" value="1"/>
</dbReference>
<dbReference type="SMART" id="SM00729">
    <property type="entry name" value="Elp3"/>
    <property type="match status" value="1"/>
</dbReference>
<dbReference type="SUPFAM" id="SSF102114">
    <property type="entry name" value="Radical SAM enzymes"/>
    <property type="match status" value="1"/>
</dbReference>
<dbReference type="PROSITE" id="PS51449">
    <property type="entry name" value="MTTASE_N"/>
    <property type="match status" value="1"/>
</dbReference>
<dbReference type="PROSITE" id="PS01278">
    <property type="entry name" value="MTTASE_RADICAL"/>
    <property type="match status" value="1"/>
</dbReference>
<dbReference type="PROSITE" id="PS51918">
    <property type="entry name" value="RADICAL_SAM"/>
    <property type="match status" value="1"/>
</dbReference>
<reference key="1">
    <citation type="journal article" date="2005" name="Proc. Natl. Acad. Sci. U.S.A.">
        <title>The psychrophilic lifestyle as revealed by the genome sequence of Colwellia psychrerythraea 34H through genomic and proteomic analyses.</title>
        <authorList>
            <person name="Methe B.A."/>
            <person name="Nelson K.E."/>
            <person name="Deming J.W."/>
            <person name="Momen B."/>
            <person name="Melamud E."/>
            <person name="Zhang X."/>
            <person name="Moult J."/>
            <person name="Madupu R."/>
            <person name="Nelson W.C."/>
            <person name="Dodson R.J."/>
            <person name="Brinkac L.M."/>
            <person name="Daugherty S.C."/>
            <person name="Durkin A.S."/>
            <person name="DeBoy R.T."/>
            <person name="Kolonay J.F."/>
            <person name="Sullivan S.A."/>
            <person name="Zhou L."/>
            <person name="Davidsen T.M."/>
            <person name="Wu M."/>
            <person name="Huston A.L."/>
            <person name="Lewis M."/>
            <person name="Weaver B."/>
            <person name="Weidman J.F."/>
            <person name="Khouri H."/>
            <person name="Utterback T.R."/>
            <person name="Feldblyum T.V."/>
            <person name="Fraser C.M."/>
        </authorList>
    </citation>
    <scope>NUCLEOTIDE SEQUENCE [LARGE SCALE GENOMIC DNA]</scope>
    <source>
        <strain>34H / ATCC BAA-681</strain>
    </source>
</reference>
<protein>
    <recommendedName>
        <fullName evidence="1">Ribosomal protein uS12 methylthiotransferase RimO</fullName>
        <shortName evidence="1">uS12 MTTase</shortName>
        <shortName evidence="1">uS12 methylthiotransferase</shortName>
        <ecNumber evidence="1">2.8.4.4</ecNumber>
    </recommendedName>
    <alternativeName>
        <fullName evidence="1">Ribosomal protein uS12 (aspartate-C(3))-methylthiotransferase</fullName>
    </alternativeName>
    <alternativeName>
        <fullName evidence="1">Ribosome maturation factor RimO</fullName>
    </alternativeName>
</protein>
<proteinExistence type="inferred from homology"/>
<comment type="function">
    <text evidence="1">Catalyzes the methylthiolation of an aspartic acid residue of ribosomal protein uS12.</text>
</comment>
<comment type="catalytic activity">
    <reaction evidence="1">
        <text>L-aspartate(89)-[ribosomal protein uS12]-hydrogen + (sulfur carrier)-SH + AH2 + 2 S-adenosyl-L-methionine = 3-methylsulfanyl-L-aspartate(89)-[ribosomal protein uS12]-hydrogen + (sulfur carrier)-H + 5'-deoxyadenosine + L-methionine + A + S-adenosyl-L-homocysteine + 2 H(+)</text>
        <dbReference type="Rhea" id="RHEA:37087"/>
        <dbReference type="Rhea" id="RHEA-COMP:10460"/>
        <dbReference type="Rhea" id="RHEA-COMP:10461"/>
        <dbReference type="Rhea" id="RHEA-COMP:14737"/>
        <dbReference type="Rhea" id="RHEA-COMP:14739"/>
        <dbReference type="ChEBI" id="CHEBI:13193"/>
        <dbReference type="ChEBI" id="CHEBI:15378"/>
        <dbReference type="ChEBI" id="CHEBI:17319"/>
        <dbReference type="ChEBI" id="CHEBI:17499"/>
        <dbReference type="ChEBI" id="CHEBI:29917"/>
        <dbReference type="ChEBI" id="CHEBI:29961"/>
        <dbReference type="ChEBI" id="CHEBI:57844"/>
        <dbReference type="ChEBI" id="CHEBI:57856"/>
        <dbReference type="ChEBI" id="CHEBI:59789"/>
        <dbReference type="ChEBI" id="CHEBI:64428"/>
        <dbReference type="ChEBI" id="CHEBI:73599"/>
        <dbReference type="EC" id="2.8.4.4"/>
    </reaction>
</comment>
<comment type="cofactor">
    <cofactor evidence="1">
        <name>[4Fe-4S] cluster</name>
        <dbReference type="ChEBI" id="CHEBI:49883"/>
    </cofactor>
    <text evidence="1">Binds 2 [4Fe-4S] clusters. One cluster is coordinated with 3 cysteines and an exchangeable S-adenosyl-L-methionine.</text>
</comment>
<comment type="subcellular location">
    <subcellularLocation>
        <location evidence="1">Cytoplasm</location>
    </subcellularLocation>
</comment>
<comment type="similarity">
    <text evidence="1">Belongs to the methylthiotransferase family. RimO subfamily.</text>
</comment>
<accession>Q484J7</accession>
<feature type="chain" id="PRO_0000374792" description="Ribosomal protein uS12 methylthiotransferase RimO">
    <location>
        <begin position="1"/>
        <end position="454"/>
    </location>
</feature>
<feature type="domain" description="MTTase N-terminal" evidence="1">
    <location>
        <begin position="19"/>
        <end position="129"/>
    </location>
</feature>
<feature type="domain" description="Radical SAM core" evidence="2">
    <location>
        <begin position="147"/>
        <end position="384"/>
    </location>
</feature>
<feature type="domain" description="TRAM" evidence="1">
    <location>
        <begin position="387"/>
        <end position="453"/>
    </location>
</feature>
<feature type="binding site" evidence="1">
    <location>
        <position position="28"/>
    </location>
    <ligand>
        <name>[4Fe-4S] cluster</name>
        <dbReference type="ChEBI" id="CHEBI:49883"/>
        <label>1</label>
    </ligand>
</feature>
<feature type="binding site" evidence="1">
    <location>
        <position position="64"/>
    </location>
    <ligand>
        <name>[4Fe-4S] cluster</name>
        <dbReference type="ChEBI" id="CHEBI:49883"/>
        <label>1</label>
    </ligand>
</feature>
<feature type="binding site" evidence="1">
    <location>
        <position position="93"/>
    </location>
    <ligand>
        <name>[4Fe-4S] cluster</name>
        <dbReference type="ChEBI" id="CHEBI:49883"/>
        <label>1</label>
    </ligand>
</feature>
<feature type="binding site" evidence="1">
    <location>
        <position position="161"/>
    </location>
    <ligand>
        <name>[4Fe-4S] cluster</name>
        <dbReference type="ChEBI" id="CHEBI:49883"/>
        <label>2</label>
        <note>4Fe-4S-S-AdoMet</note>
    </ligand>
</feature>
<feature type="binding site" evidence="1">
    <location>
        <position position="165"/>
    </location>
    <ligand>
        <name>[4Fe-4S] cluster</name>
        <dbReference type="ChEBI" id="CHEBI:49883"/>
        <label>2</label>
        <note>4Fe-4S-S-AdoMet</note>
    </ligand>
</feature>
<feature type="binding site" evidence="1">
    <location>
        <position position="168"/>
    </location>
    <ligand>
        <name>[4Fe-4S] cluster</name>
        <dbReference type="ChEBI" id="CHEBI:49883"/>
        <label>2</label>
        <note>4Fe-4S-S-AdoMet</note>
    </ligand>
</feature>
<evidence type="ECO:0000255" key="1">
    <source>
        <dbReference type="HAMAP-Rule" id="MF_01865"/>
    </source>
</evidence>
<evidence type="ECO:0000255" key="2">
    <source>
        <dbReference type="PROSITE-ProRule" id="PRU01266"/>
    </source>
</evidence>
<organism>
    <name type="scientific">Colwellia psychrerythraea (strain 34H / ATCC BAA-681)</name>
    <name type="common">Vibrio psychroerythus</name>
    <dbReference type="NCBI Taxonomy" id="167879"/>
    <lineage>
        <taxon>Bacteria</taxon>
        <taxon>Pseudomonadati</taxon>
        <taxon>Pseudomonadota</taxon>
        <taxon>Gammaproteobacteria</taxon>
        <taxon>Alteromonadales</taxon>
        <taxon>Colwelliaceae</taxon>
        <taxon>Colwellia</taxon>
    </lineage>
</organism>
<gene>
    <name evidence="1" type="primary">rimO</name>
    <name type="ordered locus">CPS_1787</name>
</gene>
<sequence length="454" mass="50651">MIAEQHQAVVDSGASKKGAKVGFVSLGCPKNLVDSERILTQLRTEGYDVTNSYDDAELVIVNTCGFIDSAVQESLDTIGEALAANGKVLVTGCLGVKKDEIIELHPNVLGVTGPHAYDEVLAQVHEHVAKPEHNPFIDLVPPQGVKLTPKHYAYLKISEGCNHRCTFCIIPSMRGDLDSRPVGDVLGEAKRLVDSGVKELLVISQDTSAYGVDVKHKTDFWDGMPVKTHMQQLCEELAKQGVWIRLHYVYPYPHVDKIIPLMAEGKILPYLDIPFQHANKRILKLMKRPGSSDRVLERIAKWREICPELVIRSTFIVGFPGETEEEFEELLNFLEEAQLDRVGCFKYSPVEGATANALPDHVSDEVMEDRLQRFMAVQAKISSDKLQVRIGQEYLILVDEVNGLGIVGRSYMDAPEVDGKVYLSDDYDAKPGDQIWVQIIHADEHDVWGVRVED</sequence>
<keyword id="KW-0004">4Fe-4S</keyword>
<keyword id="KW-0963">Cytoplasm</keyword>
<keyword id="KW-0408">Iron</keyword>
<keyword id="KW-0411">Iron-sulfur</keyword>
<keyword id="KW-0479">Metal-binding</keyword>
<keyword id="KW-0949">S-adenosyl-L-methionine</keyword>
<keyword id="KW-0808">Transferase</keyword>
<name>RIMO_COLP3</name>